<keyword id="KW-0131">Cell cycle</keyword>
<keyword id="KW-0132">Cell division</keyword>
<keyword id="KW-0963">Cytoplasm</keyword>
<keyword id="KW-0342">GTP-binding</keyword>
<keyword id="KW-0547">Nucleotide-binding</keyword>
<keyword id="KW-1185">Reference proteome</keyword>
<keyword id="KW-0717">Septation</keyword>
<comment type="function">
    <text evidence="1">Essential cell division protein that forms a contractile ring structure (Z ring) at the future cell division site. The regulation of the ring assembly controls the timing and the location of cell division. One of the functions of the FtsZ ring is to recruit other cell division proteins to the septum to produce a new cell wall between the dividing cells. Binds GTP and shows GTPase activity.</text>
</comment>
<comment type="subunit">
    <text evidence="1">Homodimer. Polymerizes to form a dynamic ring structure in a strictly GTP-dependent manner. Interacts directly with several other division proteins.</text>
</comment>
<comment type="subcellular location">
    <subcellularLocation>
        <location evidence="1">Cytoplasm</location>
    </subcellularLocation>
    <text evidence="1">Assembles at midcell at the inner surface of the cytoplasmic membrane.</text>
</comment>
<comment type="similarity">
    <text evidence="1">Belongs to the FtsZ family.</text>
</comment>
<proteinExistence type="inferred from homology"/>
<protein>
    <recommendedName>
        <fullName evidence="1">Cell division protein FtsZ</fullName>
    </recommendedName>
</protein>
<organism>
    <name type="scientific">Nostoc sp. (strain PCC 7120 / SAG 25.82 / UTEX 2576)</name>
    <dbReference type="NCBI Taxonomy" id="103690"/>
    <lineage>
        <taxon>Bacteria</taxon>
        <taxon>Bacillati</taxon>
        <taxon>Cyanobacteriota</taxon>
        <taxon>Cyanophyceae</taxon>
        <taxon>Nostocales</taxon>
        <taxon>Nostocaceae</taxon>
        <taxon>Nostoc</taxon>
    </lineage>
</organism>
<reference key="1">
    <citation type="journal article" date="1995" name="Res. Microbiol.">
        <title>Analysis of genes encoding the cell division protein FtsZ and a glutathione synthetase homologue in the cyanobacterium Anabaena sp. PCC 7120.</title>
        <authorList>
            <person name="Zhang C.C."/>
            <person name="Huguenin S."/>
            <person name="Friry A."/>
        </authorList>
    </citation>
    <scope>NUCLEOTIDE SEQUENCE [GENOMIC DNA]</scope>
</reference>
<reference key="2">
    <citation type="journal article" date="2001" name="DNA Res.">
        <title>Complete genomic sequence of the filamentous nitrogen-fixing cyanobacterium Anabaena sp. strain PCC 7120.</title>
        <authorList>
            <person name="Kaneko T."/>
            <person name="Nakamura Y."/>
            <person name="Wolk C.P."/>
            <person name="Kuritz T."/>
            <person name="Sasamoto S."/>
            <person name="Watanabe A."/>
            <person name="Iriguchi M."/>
            <person name="Ishikawa A."/>
            <person name="Kawashima K."/>
            <person name="Kimura T."/>
            <person name="Kishida Y."/>
            <person name="Kohara M."/>
            <person name="Matsumoto M."/>
            <person name="Matsuno A."/>
            <person name="Muraki A."/>
            <person name="Nakazaki N."/>
            <person name="Shimpo S."/>
            <person name="Sugimoto M."/>
            <person name="Takazawa M."/>
            <person name="Yamada M."/>
            <person name="Yasuda M."/>
            <person name="Tabata S."/>
        </authorList>
    </citation>
    <scope>NUCLEOTIDE SEQUENCE [LARGE SCALE GENOMIC DNA]</scope>
    <source>
        <strain>PCC 7120 / SAG 25.82 / UTEX 2576</strain>
    </source>
</reference>
<reference key="3">
    <citation type="journal article" date="1995" name="Gene">
        <title>Cloning and sequence of ftsZ and flanking regions from the cyanobacterium Anabaena PCC 7120.</title>
        <authorList>
            <person name="Doherty H.M."/>
            <person name="Adams D.G."/>
        </authorList>
    </citation>
    <scope>NUCLEOTIDE SEQUENCE [GENOMIC DNA] OF 50-428</scope>
</reference>
<accession>P45482</accession>
<name>FTSZ_NOSS1</name>
<dbReference type="EMBL" id="Z31371">
    <property type="protein sequence ID" value="CAA83241.1"/>
    <property type="molecule type" value="Genomic_DNA"/>
</dbReference>
<dbReference type="EMBL" id="BA000019">
    <property type="protein sequence ID" value="BAB75557.1"/>
    <property type="molecule type" value="Genomic_DNA"/>
</dbReference>
<dbReference type="EMBL" id="U14408">
    <property type="protein sequence ID" value="AAA85526.1"/>
    <property type="molecule type" value="Genomic_DNA"/>
</dbReference>
<dbReference type="PIR" id="AC2288">
    <property type="entry name" value="AC2288"/>
</dbReference>
<dbReference type="PIR" id="JC4289">
    <property type="entry name" value="JC4289"/>
</dbReference>
<dbReference type="RefSeq" id="WP_010997999.1">
    <property type="nucleotide sequence ID" value="NZ_RSCN01000011.1"/>
</dbReference>
<dbReference type="SMR" id="P45482"/>
<dbReference type="STRING" id="103690.gene:10495900"/>
<dbReference type="KEGG" id="ana:alr3858"/>
<dbReference type="eggNOG" id="COG0206">
    <property type="taxonomic scope" value="Bacteria"/>
</dbReference>
<dbReference type="OrthoDB" id="9813375at2"/>
<dbReference type="Proteomes" id="UP000002483">
    <property type="component" value="Chromosome"/>
</dbReference>
<dbReference type="GO" id="GO:0032153">
    <property type="term" value="C:cell division site"/>
    <property type="evidence" value="ECO:0007669"/>
    <property type="project" value="UniProtKB-UniRule"/>
</dbReference>
<dbReference type="GO" id="GO:0005737">
    <property type="term" value="C:cytoplasm"/>
    <property type="evidence" value="ECO:0007669"/>
    <property type="project" value="UniProtKB-SubCell"/>
</dbReference>
<dbReference type="GO" id="GO:0005525">
    <property type="term" value="F:GTP binding"/>
    <property type="evidence" value="ECO:0007669"/>
    <property type="project" value="UniProtKB-UniRule"/>
</dbReference>
<dbReference type="GO" id="GO:0003924">
    <property type="term" value="F:GTPase activity"/>
    <property type="evidence" value="ECO:0007669"/>
    <property type="project" value="UniProtKB-UniRule"/>
</dbReference>
<dbReference type="GO" id="GO:0000917">
    <property type="term" value="P:division septum assembly"/>
    <property type="evidence" value="ECO:0007669"/>
    <property type="project" value="UniProtKB-KW"/>
</dbReference>
<dbReference type="GO" id="GO:0043093">
    <property type="term" value="P:FtsZ-dependent cytokinesis"/>
    <property type="evidence" value="ECO:0007669"/>
    <property type="project" value="UniProtKB-UniRule"/>
</dbReference>
<dbReference type="GO" id="GO:0051258">
    <property type="term" value="P:protein polymerization"/>
    <property type="evidence" value="ECO:0007669"/>
    <property type="project" value="UniProtKB-UniRule"/>
</dbReference>
<dbReference type="CDD" id="cd02201">
    <property type="entry name" value="FtsZ_type1"/>
    <property type="match status" value="1"/>
</dbReference>
<dbReference type="FunFam" id="3.40.50.1440:FF:000023">
    <property type="entry name" value="Cell division protein FtsZ"/>
    <property type="match status" value="1"/>
</dbReference>
<dbReference type="FunFam" id="3.30.1330.20:FF:000007">
    <property type="entry name" value="Cell division protein ftsZ, putative"/>
    <property type="match status" value="1"/>
</dbReference>
<dbReference type="Gene3D" id="3.30.1330.20">
    <property type="entry name" value="Tubulin/FtsZ, C-terminal domain"/>
    <property type="match status" value="1"/>
</dbReference>
<dbReference type="Gene3D" id="3.40.50.1440">
    <property type="entry name" value="Tubulin/FtsZ, GTPase domain"/>
    <property type="match status" value="1"/>
</dbReference>
<dbReference type="HAMAP" id="MF_00909">
    <property type="entry name" value="FtsZ"/>
    <property type="match status" value="1"/>
</dbReference>
<dbReference type="InterPro" id="IPR000158">
    <property type="entry name" value="Cell_div_FtsZ"/>
</dbReference>
<dbReference type="InterPro" id="IPR020805">
    <property type="entry name" value="Cell_div_FtsZ_CS"/>
</dbReference>
<dbReference type="InterPro" id="IPR045061">
    <property type="entry name" value="FtsZ/CetZ"/>
</dbReference>
<dbReference type="InterPro" id="IPR024757">
    <property type="entry name" value="FtsZ_C"/>
</dbReference>
<dbReference type="InterPro" id="IPR008280">
    <property type="entry name" value="Tub_FtsZ_C"/>
</dbReference>
<dbReference type="InterPro" id="IPR037103">
    <property type="entry name" value="Tubulin/FtsZ-like_C"/>
</dbReference>
<dbReference type="InterPro" id="IPR018316">
    <property type="entry name" value="Tubulin/FtsZ_2-layer-sand-dom"/>
</dbReference>
<dbReference type="InterPro" id="IPR036525">
    <property type="entry name" value="Tubulin/FtsZ_GTPase_sf"/>
</dbReference>
<dbReference type="InterPro" id="IPR003008">
    <property type="entry name" value="Tubulin_FtsZ_GTPase"/>
</dbReference>
<dbReference type="NCBIfam" id="TIGR00065">
    <property type="entry name" value="ftsZ"/>
    <property type="match status" value="1"/>
</dbReference>
<dbReference type="PANTHER" id="PTHR30314">
    <property type="entry name" value="CELL DIVISION PROTEIN FTSZ-RELATED"/>
    <property type="match status" value="1"/>
</dbReference>
<dbReference type="PANTHER" id="PTHR30314:SF3">
    <property type="entry name" value="MITOCHONDRIAL DIVISION PROTEIN FSZA"/>
    <property type="match status" value="1"/>
</dbReference>
<dbReference type="Pfam" id="PF12327">
    <property type="entry name" value="FtsZ_C"/>
    <property type="match status" value="1"/>
</dbReference>
<dbReference type="Pfam" id="PF00091">
    <property type="entry name" value="Tubulin"/>
    <property type="match status" value="1"/>
</dbReference>
<dbReference type="PRINTS" id="PR00423">
    <property type="entry name" value="CELLDVISFTSZ"/>
</dbReference>
<dbReference type="SMART" id="SM00864">
    <property type="entry name" value="Tubulin"/>
    <property type="match status" value="1"/>
</dbReference>
<dbReference type="SMART" id="SM00865">
    <property type="entry name" value="Tubulin_C"/>
    <property type="match status" value="1"/>
</dbReference>
<dbReference type="SUPFAM" id="SSF55307">
    <property type="entry name" value="Tubulin C-terminal domain-like"/>
    <property type="match status" value="1"/>
</dbReference>
<dbReference type="SUPFAM" id="SSF52490">
    <property type="entry name" value="Tubulin nucleotide-binding domain-like"/>
    <property type="match status" value="1"/>
</dbReference>
<dbReference type="PROSITE" id="PS01134">
    <property type="entry name" value="FTSZ_1"/>
    <property type="match status" value="1"/>
</dbReference>
<dbReference type="PROSITE" id="PS01135">
    <property type="entry name" value="FTSZ_2"/>
    <property type="match status" value="1"/>
</dbReference>
<gene>
    <name evidence="1" type="primary">ftsZ</name>
    <name type="ordered locus">alr3858</name>
</gene>
<sequence>MTLDNNQELTYRNSQSLGQPGFSLAVNSSNPFNHSGLNFGQNNDSKKISVENNRIGEIVPGRVANIKVIGVGGGGGNAVNRMIESDVSGVEFWSINTDAQALTLAGAPSRLQIGQKLTRGLGAGGNPAIGQKAAEESRDEIATALEGADLVFITAGMGGGTGTGAAPIVAEVAKEMGALTVGVVTRPFVFEGRRRTSQAEQGIEGLKSRVDTLIIIPNNKLLEVIPEQTPVQEAFRYADDVLRQGVQGISDIITIPGLVNVDFADVRAVMADAGSALMGIGVSSGKSRAREAAIAAISSPLLECSIEGARGVVFNITGGSDLTLHEVNAAAETIYEVVDPNANIIFGAVIDDRLQGEVRITVIATGFTGEIQAAPQQNAANARVVSAPPKRTPTQTPLTNSPAPTPEPKEKSGLDIPDFLQRRRPPKN</sequence>
<evidence type="ECO:0000255" key="1">
    <source>
        <dbReference type="HAMAP-Rule" id="MF_00909"/>
    </source>
</evidence>
<evidence type="ECO:0000256" key="2">
    <source>
        <dbReference type="SAM" id="MobiDB-lite"/>
    </source>
</evidence>
<evidence type="ECO:0000305" key="3"/>
<feature type="chain" id="PRO_0000114337" description="Cell division protein FtsZ">
    <location>
        <begin position="1"/>
        <end position="428"/>
    </location>
</feature>
<feature type="region of interest" description="Disordered" evidence="2">
    <location>
        <begin position="378"/>
        <end position="428"/>
    </location>
</feature>
<feature type="compositionally biased region" description="Polar residues" evidence="2">
    <location>
        <begin position="392"/>
        <end position="402"/>
    </location>
</feature>
<feature type="binding site" evidence="1">
    <location>
        <begin position="73"/>
        <end position="77"/>
    </location>
    <ligand>
        <name>GTP</name>
        <dbReference type="ChEBI" id="CHEBI:37565"/>
    </ligand>
</feature>
<feature type="binding site" evidence="1">
    <location>
        <begin position="160"/>
        <end position="162"/>
    </location>
    <ligand>
        <name>GTP</name>
        <dbReference type="ChEBI" id="CHEBI:37565"/>
    </ligand>
</feature>
<feature type="binding site" evidence="1">
    <location>
        <position position="191"/>
    </location>
    <ligand>
        <name>GTP</name>
        <dbReference type="ChEBI" id="CHEBI:37565"/>
    </ligand>
</feature>
<feature type="binding site" evidence="1">
    <location>
        <position position="195"/>
    </location>
    <ligand>
        <name>GTP</name>
        <dbReference type="ChEBI" id="CHEBI:37565"/>
    </ligand>
</feature>
<feature type="binding site" evidence="1">
    <location>
        <position position="239"/>
    </location>
    <ligand>
        <name>GTP</name>
        <dbReference type="ChEBI" id="CHEBI:37565"/>
    </ligand>
</feature>
<feature type="sequence conflict" description="In Ref. 1." evidence="3" ref="1">
    <original>S</original>
    <variation>A</variation>
    <location>
        <position position="386"/>
    </location>
</feature>